<sequence length="874" mass="97386">MLKKFDKKDEESGGGSNPFQHLEKSAVLQEARVFNETPINPRKCAHILTKILYLINQGEHLGTTEATEAFFAMTKLFQSNDPTLRRMCYLTIKEMSCIAEDVIIVTSSLTKDMTGKEDSYRGPAVRALCQITDSTMLQAIERYMKQAIVDKVPSVSSSALVSSLHLLKCSFDVVKRWVNEAQEAASSDNIMVQYHALGLLYHVRKNDRLAVSKMISKFTRHGLKSPFAYCMMIRVASRQLEDEDGSRDSPLFDFIESCLRNKHEMVVYEAASAIVNLPGCSAKELAPAVSVLQLFCSSPKAALRYAAVRTLNKVAMKHPSAVTACNLDLENLVTDANRSIATLAITTLLKTGSEGSIDRLMKQISSFMSEISDEFKVVVVQAISALCQKYPRKHAVLMNFLFSMLREEGGFEYKRAIVDCIISIIEENAESKETGLSHLCEFIEDCEFTVLATRILHLLGQEGPRTSNPSKYIRFIYNRVVLEHAEVRAGAVSALAKFGAQNEEMLPSILVLLKRCVMDDDNEVRDRATFYLNVLEQKQKALNAGYILNGLAVSIPGLERALQQYTLEPSEKPFDLKSVPLATAPLAEQRTESTPVTAAKQPEKVAATRQEIFQEQLAAVPEFQGLGPLFKSSPEPVALTESETEYVIRCTKHTFTDHMVFQFDCTNTLNDQTLENVTVQMEPSEAYEVLCYVPARSLPYNQPGTCYTLVALPKEDPTAVACTFSCVMKFTVKDCDPTTGEADDEGYEDEYVLEDLEVTIADHIQKVMKLNFEAAWDEVGDEFQKEETFTLSTIKTLEEAVGNIVKFLGMHPCERSDKVPDNKNTHTLLLAGVFRGGHDILVRSRLLLLDTVTMQVTARSSEELPVDIVLASVG</sequence>
<feature type="chain" id="PRO_0000193857" description="Coatomer subunit gamma-1">
    <location>
        <begin position="1"/>
        <end position="874"/>
    </location>
</feature>
<feature type="repeat" description="HEAT 1">
    <location>
        <begin position="64"/>
        <end position="101"/>
    </location>
</feature>
<feature type="repeat" description="HEAT 2">
    <location>
        <begin position="283"/>
        <end position="320"/>
    </location>
</feature>
<feature type="repeat" description="HEAT 3">
    <location>
        <begin position="322"/>
        <end position="355"/>
    </location>
</feature>
<feature type="repeat" description="HEAT 4">
    <location>
        <begin position="356"/>
        <end position="392"/>
    </location>
</feature>
<feature type="region of interest" description="Disordered" evidence="3">
    <location>
        <begin position="1"/>
        <end position="21"/>
    </location>
</feature>
<feature type="region of interest" description="Interaction with ZNF289/ARFGAP2" evidence="1">
    <location>
        <begin position="609"/>
        <end position="874"/>
    </location>
</feature>
<feature type="compositionally biased region" description="Basic and acidic residues" evidence="3">
    <location>
        <begin position="1"/>
        <end position="11"/>
    </location>
</feature>
<feature type="modified residue" description="Phosphothreonine" evidence="2">
    <location>
        <position position="594"/>
    </location>
</feature>
<feature type="sequence conflict" description="In Ref. 2; AAI11323." evidence="6" ref="2">
    <original>S</original>
    <variation>T</variation>
    <location>
        <position position="684"/>
    </location>
</feature>
<feature type="helix" evidence="8">
    <location>
        <begin position="24"/>
        <end position="30"/>
    </location>
</feature>
<feature type="helix" evidence="8">
    <location>
        <begin position="31"/>
        <end position="33"/>
    </location>
</feature>
<feature type="strand" evidence="8">
    <location>
        <begin position="36"/>
        <end position="38"/>
    </location>
</feature>
<feature type="helix" evidence="8">
    <location>
        <begin position="41"/>
        <end position="57"/>
    </location>
</feature>
<feature type="helix" evidence="8">
    <location>
        <begin position="63"/>
        <end position="74"/>
    </location>
</feature>
<feature type="helix" evidence="8">
    <location>
        <begin position="75"/>
        <end position="78"/>
    </location>
</feature>
<feature type="helix" evidence="8">
    <location>
        <begin position="82"/>
        <end position="95"/>
    </location>
</feature>
<feature type="turn" evidence="8">
    <location>
        <begin position="96"/>
        <end position="98"/>
    </location>
</feature>
<feature type="helix" evidence="8">
    <location>
        <begin position="102"/>
        <end position="105"/>
    </location>
</feature>
<feature type="helix" evidence="8">
    <location>
        <begin position="106"/>
        <end position="114"/>
    </location>
</feature>
<feature type="helix" evidence="8">
    <location>
        <begin position="118"/>
        <end position="131"/>
    </location>
</feature>
<feature type="turn" evidence="8">
    <location>
        <begin position="134"/>
        <end position="136"/>
    </location>
</feature>
<feature type="helix" evidence="8">
    <location>
        <begin position="137"/>
        <end position="148"/>
    </location>
</feature>
<feature type="helix" evidence="8">
    <location>
        <begin position="153"/>
        <end position="166"/>
    </location>
</feature>
<feature type="turn" evidence="8">
    <location>
        <begin position="167"/>
        <end position="169"/>
    </location>
</feature>
<feature type="helix" evidence="8">
    <location>
        <begin position="171"/>
        <end position="175"/>
    </location>
</feature>
<feature type="helix" evidence="8">
    <location>
        <begin position="178"/>
        <end position="184"/>
    </location>
</feature>
<feature type="helix" evidence="8">
    <location>
        <begin position="190"/>
        <end position="204"/>
    </location>
</feature>
<feature type="helix" evidence="8">
    <location>
        <begin position="208"/>
        <end position="219"/>
    </location>
</feature>
<feature type="helix" evidence="8">
    <location>
        <begin position="226"/>
        <end position="236"/>
    </location>
</feature>
<feature type="helix" evidence="8">
    <location>
        <begin position="264"/>
        <end position="274"/>
    </location>
</feature>
<feature type="helix" evidence="8">
    <location>
        <begin position="292"/>
        <end position="297"/>
    </location>
</feature>
<feature type="strand" evidence="8">
    <location>
        <begin position="298"/>
        <end position="303"/>
    </location>
</feature>
<feature type="helix" evidence="8">
    <location>
        <begin position="304"/>
        <end position="309"/>
    </location>
</feature>
<feature type="helix" evidence="7">
    <location>
        <begin position="609"/>
        <end position="618"/>
    </location>
</feature>
<feature type="helix" evidence="7">
    <location>
        <begin position="621"/>
        <end position="623"/>
    </location>
</feature>
<feature type="strand" evidence="7">
    <location>
        <begin position="644"/>
        <end position="654"/>
    </location>
</feature>
<feature type="strand" evidence="7">
    <location>
        <begin position="656"/>
        <end position="667"/>
    </location>
</feature>
<feature type="strand" evidence="7">
    <location>
        <begin position="672"/>
        <end position="686"/>
    </location>
</feature>
<feature type="strand" evidence="7">
    <location>
        <begin position="688"/>
        <end position="693"/>
    </location>
</feature>
<feature type="strand" evidence="7">
    <location>
        <begin position="695"/>
        <end position="698"/>
    </location>
</feature>
<feature type="strand" evidence="7">
    <location>
        <begin position="704"/>
        <end position="711"/>
    </location>
</feature>
<feature type="strand" evidence="7">
    <location>
        <begin position="722"/>
        <end position="735"/>
    </location>
</feature>
<feature type="turn" evidence="7">
    <location>
        <begin position="737"/>
        <end position="739"/>
    </location>
</feature>
<feature type="strand" evidence="7">
    <location>
        <begin position="747"/>
        <end position="752"/>
    </location>
</feature>
<feature type="strand" evidence="7">
    <location>
        <begin position="756"/>
        <end position="758"/>
    </location>
</feature>
<feature type="helix" evidence="7">
    <location>
        <begin position="760"/>
        <end position="763"/>
    </location>
</feature>
<feature type="strand" evidence="7">
    <location>
        <begin position="764"/>
        <end position="766"/>
    </location>
</feature>
<feature type="helix" evidence="7">
    <location>
        <begin position="772"/>
        <end position="779"/>
    </location>
</feature>
<feature type="strand" evidence="7">
    <location>
        <begin position="785"/>
        <end position="793"/>
    </location>
</feature>
<feature type="helix" evidence="7">
    <location>
        <begin position="797"/>
        <end position="808"/>
    </location>
</feature>
<feature type="turn" evidence="7">
    <location>
        <begin position="814"/>
        <end position="817"/>
    </location>
</feature>
<feature type="strand" evidence="7">
    <location>
        <begin position="824"/>
        <end position="834"/>
    </location>
</feature>
<feature type="strand" evidence="7">
    <location>
        <begin position="839"/>
        <end position="862"/>
    </location>
</feature>
<feature type="helix" evidence="7">
    <location>
        <begin position="863"/>
        <end position="872"/>
    </location>
</feature>
<keyword id="KW-0002">3D-structure</keyword>
<keyword id="KW-0963">Cytoplasm</keyword>
<keyword id="KW-0968">Cytoplasmic vesicle</keyword>
<keyword id="KW-0903">Direct protein sequencing</keyword>
<keyword id="KW-0931">ER-Golgi transport</keyword>
<keyword id="KW-0333">Golgi apparatus</keyword>
<keyword id="KW-0472">Membrane</keyword>
<keyword id="KW-0597">Phosphoprotein</keyword>
<keyword id="KW-0653">Protein transport</keyword>
<keyword id="KW-1185">Reference proteome</keyword>
<keyword id="KW-0677">Repeat</keyword>
<keyword id="KW-0813">Transport</keyword>
<organism>
    <name type="scientific">Bos taurus</name>
    <name type="common">Bovine</name>
    <dbReference type="NCBI Taxonomy" id="9913"/>
    <lineage>
        <taxon>Eukaryota</taxon>
        <taxon>Metazoa</taxon>
        <taxon>Chordata</taxon>
        <taxon>Craniata</taxon>
        <taxon>Vertebrata</taxon>
        <taxon>Euteleostomi</taxon>
        <taxon>Mammalia</taxon>
        <taxon>Eutheria</taxon>
        <taxon>Laurasiatheria</taxon>
        <taxon>Artiodactyla</taxon>
        <taxon>Ruminantia</taxon>
        <taxon>Pecora</taxon>
        <taxon>Bovidae</taxon>
        <taxon>Bovinae</taxon>
        <taxon>Bos</taxon>
    </lineage>
</organism>
<dbReference type="EMBL" id="X92987">
    <property type="protein sequence ID" value="CAA63574.1"/>
    <property type="molecule type" value="mRNA"/>
</dbReference>
<dbReference type="EMBL" id="BC111322">
    <property type="protein sequence ID" value="AAI11323.1"/>
    <property type="molecule type" value="mRNA"/>
</dbReference>
<dbReference type="EMBL" id="X70019">
    <property type="protein sequence ID" value="CAA49616.1"/>
    <property type="molecule type" value="mRNA"/>
</dbReference>
<dbReference type="PIR" id="S33957">
    <property type="entry name" value="S33957"/>
</dbReference>
<dbReference type="RefSeq" id="NP_001032904.1">
    <property type="nucleotide sequence ID" value="NM_001037815.2"/>
</dbReference>
<dbReference type="PDB" id="1PZD">
    <property type="method" value="X-ray"/>
    <property type="resolution" value="2.31 A"/>
    <property type="chains" value="A=555-874"/>
</dbReference>
<dbReference type="PDB" id="3TJZ">
    <property type="method" value="X-ray"/>
    <property type="resolution" value="2.90 A"/>
    <property type="chains" value="B/E=1-355"/>
</dbReference>
<dbReference type="PDBsum" id="1PZD"/>
<dbReference type="PDBsum" id="3TJZ"/>
<dbReference type="SMR" id="P53620"/>
<dbReference type="BioGRID" id="160192">
    <property type="interactions" value="2"/>
</dbReference>
<dbReference type="DIP" id="DIP-739N"/>
<dbReference type="FunCoup" id="P53620">
    <property type="interactions" value="3813"/>
</dbReference>
<dbReference type="IntAct" id="P53620">
    <property type="interactions" value="1"/>
</dbReference>
<dbReference type="MINT" id="P53620"/>
<dbReference type="STRING" id="9913.ENSBTAP00000017588"/>
<dbReference type="PaxDb" id="9913-ENSBTAP00000017588"/>
<dbReference type="PeptideAtlas" id="P53620"/>
<dbReference type="GeneID" id="338055"/>
<dbReference type="KEGG" id="bta:338055"/>
<dbReference type="CTD" id="22820"/>
<dbReference type="eggNOG" id="KOG1078">
    <property type="taxonomic scope" value="Eukaryota"/>
</dbReference>
<dbReference type="HOGENOM" id="CLU_010353_2_0_1"/>
<dbReference type="InParanoid" id="P53620"/>
<dbReference type="OrthoDB" id="1074925at2759"/>
<dbReference type="TreeFam" id="TF300324"/>
<dbReference type="EvolutionaryTrace" id="P53620"/>
<dbReference type="Proteomes" id="UP000009136">
    <property type="component" value="Unplaced"/>
</dbReference>
<dbReference type="GO" id="GO:0030126">
    <property type="term" value="C:COPI vesicle coat"/>
    <property type="evidence" value="ECO:0000314"/>
    <property type="project" value="UniProtKB"/>
</dbReference>
<dbReference type="GO" id="GO:0005829">
    <property type="term" value="C:cytosol"/>
    <property type="evidence" value="ECO:0007669"/>
    <property type="project" value="UniProtKB-SubCell"/>
</dbReference>
<dbReference type="GO" id="GO:0005783">
    <property type="term" value="C:endoplasmic reticulum"/>
    <property type="evidence" value="ECO:0000318"/>
    <property type="project" value="GO_Central"/>
</dbReference>
<dbReference type="GO" id="GO:0005793">
    <property type="term" value="C:endoplasmic reticulum-Golgi intermediate compartment"/>
    <property type="evidence" value="ECO:0000318"/>
    <property type="project" value="GO_Central"/>
</dbReference>
<dbReference type="GO" id="GO:0000139">
    <property type="term" value="C:Golgi membrane"/>
    <property type="evidence" value="ECO:0000318"/>
    <property type="project" value="GO_Central"/>
</dbReference>
<dbReference type="GO" id="GO:0005198">
    <property type="term" value="F:structural molecule activity"/>
    <property type="evidence" value="ECO:0007669"/>
    <property type="project" value="InterPro"/>
</dbReference>
<dbReference type="GO" id="GO:0006888">
    <property type="term" value="P:endoplasmic reticulum to Golgi vesicle-mediated transport"/>
    <property type="evidence" value="ECO:0000318"/>
    <property type="project" value="GO_Central"/>
</dbReference>
<dbReference type="GO" id="GO:0006891">
    <property type="term" value="P:intra-Golgi vesicle-mediated transport"/>
    <property type="evidence" value="ECO:0000318"/>
    <property type="project" value="GO_Central"/>
</dbReference>
<dbReference type="GO" id="GO:0006886">
    <property type="term" value="P:intracellular protein transport"/>
    <property type="evidence" value="ECO:0007669"/>
    <property type="project" value="InterPro"/>
</dbReference>
<dbReference type="GO" id="GO:0072384">
    <property type="term" value="P:organelle transport along microtubule"/>
    <property type="evidence" value="ECO:0000318"/>
    <property type="project" value="GO_Central"/>
</dbReference>
<dbReference type="GO" id="GO:0009306">
    <property type="term" value="P:protein secretion"/>
    <property type="evidence" value="ECO:0000318"/>
    <property type="project" value="GO_Central"/>
</dbReference>
<dbReference type="GO" id="GO:0006890">
    <property type="term" value="P:retrograde vesicle-mediated transport, Golgi to endoplasmic reticulum"/>
    <property type="evidence" value="ECO:0000304"/>
    <property type="project" value="UniProtKB"/>
</dbReference>
<dbReference type="FunFam" id="1.25.10.10:FF:000038">
    <property type="entry name" value="Coatomer subunit gamma"/>
    <property type="match status" value="1"/>
</dbReference>
<dbReference type="FunFam" id="2.60.40.1480:FF:000001">
    <property type="entry name" value="Coatomer subunit gamma"/>
    <property type="match status" value="1"/>
</dbReference>
<dbReference type="FunFam" id="3.30.310.10:FF:000006">
    <property type="entry name" value="Coatomer subunit gamma"/>
    <property type="match status" value="1"/>
</dbReference>
<dbReference type="FunFam" id="1.25.10.10:FF:001568">
    <property type="entry name" value="Uncharacterized protein"/>
    <property type="match status" value="1"/>
</dbReference>
<dbReference type="Gene3D" id="2.60.40.1480">
    <property type="entry name" value="Coatomer, gamma subunit, appendage domain"/>
    <property type="match status" value="1"/>
</dbReference>
<dbReference type="Gene3D" id="1.25.10.10">
    <property type="entry name" value="Leucine-rich Repeat Variant"/>
    <property type="match status" value="2"/>
</dbReference>
<dbReference type="Gene3D" id="3.30.310.10">
    <property type="entry name" value="TATA-Binding Protein"/>
    <property type="match status" value="1"/>
</dbReference>
<dbReference type="InterPro" id="IPR011989">
    <property type="entry name" value="ARM-like"/>
</dbReference>
<dbReference type="InterPro" id="IPR016024">
    <property type="entry name" value="ARM-type_fold"/>
</dbReference>
<dbReference type="InterPro" id="IPR002553">
    <property type="entry name" value="Clathrin/coatomer_adapt-like_N"/>
</dbReference>
<dbReference type="InterPro" id="IPR013041">
    <property type="entry name" value="Clathrin_app_Ig-like_sf"/>
</dbReference>
<dbReference type="InterPro" id="IPR009028">
    <property type="entry name" value="Coatomer/calthrin_app_sub_C"/>
</dbReference>
<dbReference type="InterPro" id="IPR032154">
    <property type="entry name" value="Coatomer_g_Cpla"/>
</dbReference>
<dbReference type="InterPro" id="IPR017106">
    <property type="entry name" value="Coatomer_gsu"/>
</dbReference>
<dbReference type="InterPro" id="IPR013040">
    <property type="entry name" value="Coatomer_gsu_app_Ig-like_dom"/>
</dbReference>
<dbReference type="InterPro" id="IPR037067">
    <property type="entry name" value="Coatomer_gsu_app_sf"/>
</dbReference>
<dbReference type="InterPro" id="IPR012295">
    <property type="entry name" value="TBP_dom_sf"/>
</dbReference>
<dbReference type="PANTHER" id="PTHR10261">
    <property type="entry name" value="COATOMER SUBUNIT GAMMA"/>
    <property type="match status" value="1"/>
</dbReference>
<dbReference type="PANTHER" id="PTHR10261:SF3">
    <property type="entry name" value="COATOMER SUBUNIT GAMMA-1"/>
    <property type="match status" value="1"/>
</dbReference>
<dbReference type="Pfam" id="PF01602">
    <property type="entry name" value="Adaptin_N"/>
    <property type="match status" value="1"/>
</dbReference>
<dbReference type="Pfam" id="PF16381">
    <property type="entry name" value="Coatomer_g_Cpla"/>
    <property type="match status" value="1"/>
</dbReference>
<dbReference type="Pfam" id="PF08752">
    <property type="entry name" value="COP-gamma_platf"/>
    <property type="match status" value="1"/>
</dbReference>
<dbReference type="PIRSF" id="PIRSF037093">
    <property type="entry name" value="Coatomer_gamma_subunit"/>
    <property type="match status" value="1"/>
</dbReference>
<dbReference type="SUPFAM" id="SSF48371">
    <property type="entry name" value="ARM repeat"/>
    <property type="match status" value="1"/>
</dbReference>
<dbReference type="SUPFAM" id="SSF49348">
    <property type="entry name" value="Clathrin adaptor appendage domain"/>
    <property type="match status" value="1"/>
</dbReference>
<dbReference type="SUPFAM" id="SSF55711">
    <property type="entry name" value="Subdomain of clathrin and coatomer appendage domain"/>
    <property type="match status" value="1"/>
</dbReference>
<evidence type="ECO:0000250" key="1"/>
<evidence type="ECO:0000250" key="2">
    <source>
        <dbReference type="UniProtKB" id="Q9Y678"/>
    </source>
</evidence>
<evidence type="ECO:0000256" key="3">
    <source>
        <dbReference type="SAM" id="MobiDB-lite"/>
    </source>
</evidence>
<evidence type="ECO:0000269" key="4">
    <source>
    </source>
</evidence>
<evidence type="ECO:0000269" key="5">
    <source>
    </source>
</evidence>
<evidence type="ECO:0000305" key="6"/>
<evidence type="ECO:0007829" key="7">
    <source>
        <dbReference type="PDB" id="1PZD"/>
    </source>
</evidence>
<evidence type="ECO:0007829" key="8">
    <source>
        <dbReference type="PDB" id="3TJZ"/>
    </source>
</evidence>
<protein>
    <recommendedName>
        <fullName>Coatomer subunit gamma-1</fullName>
    </recommendedName>
    <alternativeName>
        <fullName>Gamma-1-coat protein</fullName>
        <shortName>Gamma-1-COP</shortName>
    </alternativeName>
</protein>
<gene>
    <name type="primary">COPG1</name>
    <name type="synonym">COPG</name>
</gene>
<accession>P53620</accession>
<accession>Q2T9Q0</accession>
<comment type="function">
    <text evidence="1">The coatomer is a cytosolic protein complex that binds to dilysine motifs and reversibly associates with Golgi non-clathrin-coated vesicles, which further mediate biosynthetic protein transport from the ER, via the Golgi up to the trans Golgi network. Coatomer complex is required for budding from Golgi membranes, and is essential for the retrograde Golgi-to-ER transport of dilysine-tagged proteins. In mammals, the coatomer can only be recruited by membranes associated to ADP-ribosylation factors (ARFs), which are small GTP-binding proteins; the complex also influences the Golgi structural integrity, as well as the processing, activity, and endocytic recycling of LDL receptors. Required for limiting lipid storage in lipid droplets. Involved in lipid homeostasis by regulating the presence of perilipin family members PLIN2 and PLIN3 at the lipid droplet surface and promoting the association of adipocyte triglyceride lipase (PNPLA2) with the lipid droplet surface to mediate lipolysis (By similarity).</text>
</comment>
<comment type="subunit">
    <text evidence="1 4 5">Oligomeric complex that consists of at least the alpha, beta, beta', gamma, delta, epsilon and zeta subunits. Interacts with ZNF289/ARFGAP2 through its C-terminal appendage domain (By similarity). Interacts with EGFR upon EGF treatment; interaction is essential for regulation of EGF-dependent nuclear transport of EGFR by retrograde trafficking from the Golgi to the ER (By similarity). The coatomer interacts with KDEL receptors; the interaction is important for retrograde trafficking of KDEL-bearing proteins from the Golgi to the endoplasmic reticulum (By similarity). Interacts with COPB1 (By similarity). Interacts with TMED10 (via C-terminus). Interacts with TMED2, TMED3, TMED7 and TMED9.</text>
</comment>
<comment type="interaction">
    <interactant intactId="EBI-8511600">
        <id>P53620</id>
    </interactant>
    <interactant intactId="EBI-50735278">
        <id>Q92538-1</id>
        <label>GBF1</label>
    </interactant>
    <organismsDiffer>true</organismsDiffer>
    <experiments>2</experiments>
</comment>
<comment type="subcellular location">
    <subcellularLocation>
        <location>Cytoplasm</location>
        <location>Cytosol</location>
    </subcellularLocation>
    <subcellularLocation>
        <location evidence="1">Golgi apparatus membrane</location>
        <topology evidence="1">Peripheral membrane protein</topology>
        <orientation evidence="1">Cytoplasmic side</orientation>
    </subcellularLocation>
    <subcellularLocation>
        <location>Cytoplasmic vesicle</location>
        <location>COPI-coated vesicle membrane</location>
        <topology>Peripheral membrane protein</topology>
        <orientation>Cytoplasmic side</orientation>
    </subcellularLocation>
    <text evidence="1">The coatomer is cytoplasmic or polymerized on the cytoplasmic side of the Golgi, as well as on the vesicles/buds originating from it. Predominantly located in the cis-Golgi apparatus.</text>
</comment>
<comment type="similarity">
    <text evidence="6">Belongs to the COPG family.</text>
</comment>
<reference key="1">
    <citation type="journal article" date="1996" name="Proc. Natl. Acad. Sci. U.S.A.">
        <title>Nonclathrin coat protein gamma, a subunit of coatomer, binds to the cytoplasmic dilysine motif of membrane proteins of the early secretory pathway.</title>
        <authorList>
            <person name="Harter C."/>
            <person name="Pavel J."/>
            <person name="Coccia F."/>
            <person name="Draken E."/>
            <person name="Wegehingel S."/>
            <person name="Tschochner H."/>
            <person name="Wieland F.T."/>
        </authorList>
    </citation>
    <scope>NUCLEOTIDE SEQUENCE [MRNA]</scope>
    <source>
        <tissue>Brain</tissue>
    </source>
</reference>
<reference key="2">
    <citation type="submission" date="2005-12" db="EMBL/GenBank/DDBJ databases">
        <authorList>
            <consortium name="NIH - Mammalian Gene Collection (MGC) project"/>
        </authorList>
    </citation>
    <scope>NUCLEOTIDE SEQUENCE [LARGE SCALE MRNA]</scope>
    <source>
        <strain>Crossbred X Angus</strain>
        <tissue>Liver</tissue>
    </source>
</reference>
<reference key="3">
    <citation type="journal article" date="1992" name="FEBS Lett.">
        <title>Gamma-COP, a coat subunit of non-clathrin-coated vesicles with homology to Sec21p.</title>
        <authorList>
            <person name="Stenbeck G."/>
            <person name="Schreiner R."/>
            <person name="Herrmann D."/>
            <person name="Auerbach S."/>
            <person name="Lottspeich F."/>
            <person name="Rothman J.E."/>
            <person name="Wieland F.T."/>
        </authorList>
    </citation>
    <scope>NUCLEOTIDE SEQUENCE [MRNA] OF 312-874</scope>
    <scope>PROTEIN SEQUENCE OF 578-591; 605-618; 796-806 AND 862-874</scope>
    <scope>SUBCELLULAR LOCATION</scope>
    <source>
        <tissue>Brain</tissue>
    </source>
</reference>
<reference key="4">
    <citation type="journal article" date="1991" name="Nature">
        <title>'Coatomer': a cytosolic protein complex containing subunits of non-clathrin-coated Golgi transport vesicles.</title>
        <authorList>
            <person name="Waters M.G."/>
            <person name="Serafini T."/>
            <person name="Rothman J.E."/>
        </authorList>
    </citation>
    <scope>SUBUNIT</scope>
    <scope>SUBCELLULAR LOCATION</scope>
</reference>
<reference key="5">
    <citation type="journal article" date="2006" name="Mol. Cell. Biol.">
        <title>Coatomer, the coat protein of COPI transport vesicles, discriminates endoplasmic reticulum residents from p24 proteins.</title>
        <authorList>
            <person name="Bethune J."/>
            <person name="Kol M."/>
            <person name="Hoffmann J."/>
            <person name="Reckmann I."/>
            <person name="Brugger B."/>
            <person name="Wieland F."/>
        </authorList>
    </citation>
    <scope>INTERACTION WITH TMED2; TMED3; TMED7; TMED9 AND TMED10</scope>
</reference>
<reference key="6">
    <citation type="journal article" date="2003" name="Mol. Cell">
        <title>Conserved structural motifs in intracellular trafficking pathways: structure of the gammaCOP appendage domain.</title>
        <authorList>
            <person name="Hoffman G.R."/>
            <person name="Rahl P.B."/>
            <person name="Collins R.N."/>
            <person name="Cerione R.A."/>
        </authorList>
    </citation>
    <scope>X-RAY CRYSTALLOGRAPHY (2.31 ANGSTROMS) OF 554-874</scope>
</reference>
<proteinExistence type="evidence at protein level"/>
<name>COPG1_BOVIN</name>